<feature type="signal peptide" evidence="2">
    <location>
        <begin position="1"/>
        <end position="19"/>
    </location>
</feature>
<feature type="chain" id="PRO_5000221323" description="Probable beta-glucosidase A">
    <location>
        <begin position="20"/>
        <end position="860"/>
    </location>
</feature>
<feature type="active site" evidence="1">
    <location>
        <position position="280"/>
    </location>
</feature>
<feature type="glycosylation site" description="N-linked (GlcNAc...) asparagine" evidence="2">
    <location>
        <position position="61"/>
    </location>
</feature>
<feature type="glycosylation site" description="N-linked (GlcNAc...) asparagine" evidence="2">
    <location>
        <position position="211"/>
    </location>
</feature>
<feature type="glycosylation site" description="N-linked (GlcNAc...) asparagine" evidence="2">
    <location>
        <position position="252"/>
    </location>
</feature>
<feature type="glycosylation site" description="N-linked (GlcNAc...) asparagine" evidence="2">
    <location>
        <position position="315"/>
    </location>
</feature>
<feature type="glycosylation site" description="N-linked (GlcNAc...) asparagine" evidence="2">
    <location>
        <position position="322"/>
    </location>
</feature>
<feature type="glycosylation site" description="N-linked (GlcNAc...) asparagine" evidence="2">
    <location>
        <position position="354"/>
    </location>
</feature>
<feature type="glycosylation site" description="N-linked (GlcNAc...) asparagine" evidence="2">
    <location>
        <position position="387"/>
    </location>
</feature>
<feature type="glycosylation site" description="N-linked (GlcNAc...) asparagine" evidence="2">
    <location>
        <position position="442"/>
    </location>
</feature>
<feature type="glycosylation site" description="N-linked (GlcNAc...) asparagine" evidence="2">
    <location>
        <position position="523"/>
    </location>
</feature>
<feature type="glycosylation site" description="N-linked (GlcNAc...) asparagine" evidence="2">
    <location>
        <position position="542"/>
    </location>
</feature>
<feature type="glycosylation site" description="N-linked (GlcNAc...) asparagine" evidence="2">
    <location>
        <position position="564"/>
    </location>
</feature>
<feature type="glycosylation site" description="N-linked (GlcNAc...) asparagine" evidence="2">
    <location>
        <position position="658"/>
    </location>
</feature>
<feature type="glycosylation site" description="N-linked (GlcNAc...) asparagine" evidence="2">
    <location>
        <position position="690"/>
    </location>
</feature>
<feature type="glycosylation site" description="N-linked (GlcNAc...) asparagine" evidence="2">
    <location>
        <position position="712"/>
    </location>
</feature>
<gene>
    <name type="primary">bglA</name>
    <name type="synonym">bgl1</name>
    <name type="ORF">An18g03570</name>
</gene>
<dbReference type="EC" id="3.2.1.21"/>
<dbReference type="EMBL" id="AM270402">
    <property type="protein sequence ID" value="CAK48740.1"/>
    <property type="molecule type" value="Genomic_DNA"/>
</dbReference>
<dbReference type="RefSeq" id="XP_001398816.1">
    <property type="nucleotide sequence ID" value="XM_001398779.2"/>
</dbReference>
<dbReference type="SMR" id="A2RAL4"/>
<dbReference type="CAZy" id="GH3">
    <property type="family name" value="Glycoside Hydrolase Family 3"/>
</dbReference>
<dbReference type="GlyCosmos" id="A2RAL4">
    <property type="glycosylation" value="14 sites, No reported glycans"/>
</dbReference>
<dbReference type="EnsemblFungi" id="CAK48740">
    <property type="protein sequence ID" value="CAK48740"/>
    <property type="gene ID" value="An18g03570"/>
</dbReference>
<dbReference type="GeneID" id="4989921"/>
<dbReference type="KEGG" id="ang:An18g03570"/>
<dbReference type="VEuPathDB" id="FungiDB:An18g03570"/>
<dbReference type="HOGENOM" id="CLU_004542_2_0_1"/>
<dbReference type="UniPathway" id="UPA00696"/>
<dbReference type="Proteomes" id="UP000006706">
    <property type="component" value="Chromosome 8L"/>
</dbReference>
<dbReference type="GO" id="GO:0005576">
    <property type="term" value="C:extracellular region"/>
    <property type="evidence" value="ECO:0007669"/>
    <property type="project" value="UniProtKB-SubCell"/>
</dbReference>
<dbReference type="GO" id="GO:0008422">
    <property type="term" value="F:beta-glucosidase activity"/>
    <property type="evidence" value="ECO:0007669"/>
    <property type="project" value="UniProtKB-EC"/>
</dbReference>
<dbReference type="GO" id="GO:0015926">
    <property type="term" value="F:glucosidase activity"/>
    <property type="evidence" value="ECO:0000314"/>
    <property type="project" value="AspGD"/>
</dbReference>
<dbReference type="GO" id="GO:0016052">
    <property type="term" value="P:carbohydrate catabolic process"/>
    <property type="evidence" value="ECO:0000314"/>
    <property type="project" value="AspGD"/>
</dbReference>
<dbReference type="GO" id="GO:0030245">
    <property type="term" value="P:cellulose catabolic process"/>
    <property type="evidence" value="ECO:0007669"/>
    <property type="project" value="UniProtKB-UniPathway"/>
</dbReference>
<dbReference type="FunFam" id="2.60.40.10:FF:001391">
    <property type="entry name" value="Beta-glucosidase"/>
    <property type="match status" value="1"/>
</dbReference>
<dbReference type="FunFam" id="3.20.20.300:FF:000002">
    <property type="entry name" value="Probable beta-glucosidase"/>
    <property type="match status" value="1"/>
</dbReference>
<dbReference type="FunFam" id="3.40.50.1700:FF:000003">
    <property type="entry name" value="Probable beta-glucosidase"/>
    <property type="match status" value="1"/>
</dbReference>
<dbReference type="Gene3D" id="3.40.50.1700">
    <property type="entry name" value="Glycoside hydrolase family 3 C-terminal domain"/>
    <property type="match status" value="1"/>
</dbReference>
<dbReference type="Gene3D" id="3.20.20.300">
    <property type="entry name" value="Glycoside hydrolase, family 3, N-terminal domain"/>
    <property type="match status" value="1"/>
</dbReference>
<dbReference type="Gene3D" id="2.60.40.10">
    <property type="entry name" value="Immunoglobulins"/>
    <property type="match status" value="1"/>
</dbReference>
<dbReference type="InterPro" id="IPR050288">
    <property type="entry name" value="Cellulose_deg_GH3"/>
</dbReference>
<dbReference type="InterPro" id="IPR026891">
    <property type="entry name" value="Fn3-like"/>
</dbReference>
<dbReference type="InterPro" id="IPR019800">
    <property type="entry name" value="Glyco_hydro_3_AS"/>
</dbReference>
<dbReference type="InterPro" id="IPR002772">
    <property type="entry name" value="Glyco_hydro_3_C"/>
</dbReference>
<dbReference type="InterPro" id="IPR036881">
    <property type="entry name" value="Glyco_hydro_3_C_sf"/>
</dbReference>
<dbReference type="InterPro" id="IPR001764">
    <property type="entry name" value="Glyco_hydro_3_N"/>
</dbReference>
<dbReference type="InterPro" id="IPR036962">
    <property type="entry name" value="Glyco_hydro_3_N_sf"/>
</dbReference>
<dbReference type="InterPro" id="IPR017853">
    <property type="entry name" value="Glycoside_hydrolase_SF"/>
</dbReference>
<dbReference type="InterPro" id="IPR013783">
    <property type="entry name" value="Ig-like_fold"/>
</dbReference>
<dbReference type="PANTHER" id="PTHR42715">
    <property type="entry name" value="BETA-GLUCOSIDASE"/>
    <property type="match status" value="1"/>
</dbReference>
<dbReference type="PANTHER" id="PTHR42715:SF29">
    <property type="entry name" value="BETA-GLUCOSIDASE A-RELATED"/>
    <property type="match status" value="1"/>
</dbReference>
<dbReference type="Pfam" id="PF14310">
    <property type="entry name" value="Fn3-like"/>
    <property type="match status" value="1"/>
</dbReference>
<dbReference type="Pfam" id="PF00933">
    <property type="entry name" value="Glyco_hydro_3"/>
    <property type="match status" value="1"/>
</dbReference>
<dbReference type="Pfam" id="PF01915">
    <property type="entry name" value="Glyco_hydro_3_C"/>
    <property type="match status" value="1"/>
</dbReference>
<dbReference type="PRINTS" id="PR00133">
    <property type="entry name" value="GLHYDRLASE3"/>
</dbReference>
<dbReference type="SMART" id="SM01217">
    <property type="entry name" value="Fn3_like"/>
    <property type="match status" value="1"/>
</dbReference>
<dbReference type="SUPFAM" id="SSF51445">
    <property type="entry name" value="(Trans)glycosidases"/>
    <property type="match status" value="1"/>
</dbReference>
<dbReference type="SUPFAM" id="SSF52279">
    <property type="entry name" value="Beta-D-glucan exohydrolase, C-terminal domain"/>
    <property type="match status" value="1"/>
</dbReference>
<dbReference type="PROSITE" id="PS00775">
    <property type="entry name" value="GLYCOSYL_HYDROL_F3"/>
    <property type="match status" value="1"/>
</dbReference>
<keyword id="KW-0119">Carbohydrate metabolism</keyword>
<keyword id="KW-0136">Cellulose degradation</keyword>
<keyword id="KW-0325">Glycoprotein</keyword>
<keyword id="KW-0326">Glycosidase</keyword>
<keyword id="KW-0378">Hydrolase</keyword>
<keyword id="KW-0624">Polysaccharide degradation</keyword>
<keyword id="KW-1185">Reference proteome</keyword>
<keyword id="KW-0964">Secreted</keyword>
<keyword id="KW-0732">Signal</keyword>
<sequence length="860" mass="93229">MRFTSIEAVALTAVSLASADELAYSPPYYPSPWANGQGDWAEAYQRAVDIVSQMTLAEKVNLTTGTGWELELCVGQTGGVPRLGIPGMCAQDSPLGVRDSDYNSAFPAGVNVAATWDKNLAYLRGQAMGQEFSDKGADIQLGPAAGPLGRSPDGGRNWEGFSPDPALSGVLFAETIKGIQDAGVVATAKHYIAYEQEHFRQAPEAQGYGFNITESGSANLDDKTMHELYLWPFADAIRAGAGAVMCSYNQINNSYGCQNSYTLNKLLKAELGFQGFVMSDWAAHHAGVSGALAGLDMSMPGDVDYDSGTSYWGTNLTISVLNGTVPQWRVDDMAVRIMAAYYKVGRDRLWTPPNFSSWTRDEYGFKYYYVSEGPYEKVNQFVNVQRNHSELIRRIGADSTVLLKNDGALPLTGKERLVALIGEDAGSNPYGANGCSDRGCDNGTLAMGWGSGTANFPYLVTPEQAISNEVLKNKNGVFTATDNWAIDQIEALAKTASVSLVFVNADSGEGYINVDGNLGDRRNLTLWRNGDNVIKAAASNCNNTIVIIHSVGPVLVNEWYDNPNVTAILWGGLPGQESGNSLADVLYGRVNPGAKSPFTWGKTREAYQDYLYTEPNNGNGAPQEDFVEGVFIDYRGFDKRNETPIYEFGYGLSYTTFNYSNLQVEVLSAPAYEPASGETEAAPTFGEVGNASDYLYPDGLQRITKFIYPWLNSTDLEASSGDASYGQDASDYLPEGATDGSAQPILPAGGGAGGNPRLYDELIRVSVTIKNTGKVAGDEVPQLYVSLGGPNEPKIVLRQFERITLQPSKETQWSTTLTRRDLANWNVETQDWEITSYPKMVFAGSSSRKLPLRASLPTVH</sequence>
<protein>
    <recommendedName>
        <fullName>Probable beta-glucosidase A</fullName>
        <ecNumber>3.2.1.21</ecNumber>
    </recommendedName>
    <alternativeName>
        <fullName>Beta-D-glucoside glucohydrolase A</fullName>
    </alternativeName>
    <alternativeName>
        <fullName>Cellobiase A</fullName>
    </alternativeName>
    <alternativeName>
        <fullName>Gentiobiase A</fullName>
    </alternativeName>
</protein>
<reference key="1">
    <citation type="journal article" date="2007" name="Nat. Biotechnol.">
        <title>Genome sequencing and analysis of the versatile cell factory Aspergillus niger CBS 513.88.</title>
        <authorList>
            <person name="Pel H.J."/>
            <person name="de Winde J.H."/>
            <person name="Archer D.B."/>
            <person name="Dyer P.S."/>
            <person name="Hofmann G."/>
            <person name="Schaap P.J."/>
            <person name="Turner G."/>
            <person name="de Vries R.P."/>
            <person name="Albang R."/>
            <person name="Albermann K."/>
            <person name="Andersen M.R."/>
            <person name="Bendtsen J.D."/>
            <person name="Benen J.A.E."/>
            <person name="van den Berg M."/>
            <person name="Breestraat S."/>
            <person name="Caddick M.X."/>
            <person name="Contreras R."/>
            <person name="Cornell M."/>
            <person name="Coutinho P.M."/>
            <person name="Danchin E.G.J."/>
            <person name="Debets A.J.M."/>
            <person name="Dekker P."/>
            <person name="van Dijck P.W.M."/>
            <person name="van Dijk A."/>
            <person name="Dijkhuizen L."/>
            <person name="Driessen A.J.M."/>
            <person name="d'Enfert C."/>
            <person name="Geysens S."/>
            <person name="Goosen C."/>
            <person name="Groot G.S.P."/>
            <person name="de Groot P.W.J."/>
            <person name="Guillemette T."/>
            <person name="Henrissat B."/>
            <person name="Herweijer M."/>
            <person name="van den Hombergh J.P.T.W."/>
            <person name="van den Hondel C.A.M.J.J."/>
            <person name="van der Heijden R.T.J.M."/>
            <person name="van der Kaaij R.M."/>
            <person name="Klis F.M."/>
            <person name="Kools H.J."/>
            <person name="Kubicek C.P."/>
            <person name="van Kuyk P.A."/>
            <person name="Lauber J."/>
            <person name="Lu X."/>
            <person name="van der Maarel M.J.E.C."/>
            <person name="Meulenberg R."/>
            <person name="Menke H."/>
            <person name="Mortimer M.A."/>
            <person name="Nielsen J."/>
            <person name="Oliver S.G."/>
            <person name="Olsthoorn M."/>
            <person name="Pal K."/>
            <person name="van Peij N.N.M.E."/>
            <person name="Ram A.F.J."/>
            <person name="Rinas U."/>
            <person name="Roubos J.A."/>
            <person name="Sagt C.M.J."/>
            <person name="Schmoll M."/>
            <person name="Sun J."/>
            <person name="Ussery D."/>
            <person name="Varga J."/>
            <person name="Vervecken W."/>
            <person name="van de Vondervoort P.J.J."/>
            <person name="Wedler H."/>
            <person name="Woesten H.A.B."/>
            <person name="Zeng A.-P."/>
            <person name="van Ooyen A.J.J."/>
            <person name="Visser J."/>
            <person name="Stam H."/>
        </authorList>
    </citation>
    <scope>NUCLEOTIDE SEQUENCE [LARGE SCALE GENOMIC DNA]</scope>
    <source>
        <strain>ATCC MYA-4892 / CBS 513.88 / FGSC A1513</strain>
    </source>
</reference>
<comment type="function">
    <text evidence="1">Beta-glucosidases are one of a number of cellulolytic enzymes involved in the degradation of cellulosic biomass. Catalyzes the last step releasing glucose from the inhibitory cellobiose (By similarity).</text>
</comment>
<comment type="catalytic activity">
    <reaction>
        <text>Hydrolysis of terminal, non-reducing beta-D-glucosyl residues with release of beta-D-glucose.</text>
        <dbReference type="EC" id="3.2.1.21"/>
    </reaction>
</comment>
<comment type="pathway">
    <text>Glycan metabolism; cellulose degradation.</text>
</comment>
<comment type="subcellular location">
    <subcellularLocation>
        <location evidence="1">Secreted</location>
    </subcellularLocation>
</comment>
<comment type="similarity">
    <text evidence="3">Belongs to the glycosyl hydrolase 3 family.</text>
</comment>
<evidence type="ECO:0000250" key="1"/>
<evidence type="ECO:0000255" key="2"/>
<evidence type="ECO:0000305" key="3"/>
<accession>A2RAL4</accession>
<name>BGLA_ASPNC</name>
<organism>
    <name type="scientific">Aspergillus niger (strain ATCC MYA-4892 / CBS 513.88 / FGSC A1513)</name>
    <dbReference type="NCBI Taxonomy" id="425011"/>
    <lineage>
        <taxon>Eukaryota</taxon>
        <taxon>Fungi</taxon>
        <taxon>Dikarya</taxon>
        <taxon>Ascomycota</taxon>
        <taxon>Pezizomycotina</taxon>
        <taxon>Eurotiomycetes</taxon>
        <taxon>Eurotiomycetidae</taxon>
        <taxon>Eurotiales</taxon>
        <taxon>Aspergillaceae</taxon>
        <taxon>Aspergillus</taxon>
        <taxon>Aspergillus subgen. Circumdati</taxon>
    </lineage>
</organism>
<proteinExistence type="inferred from homology"/>